<accession>Q8KAW2</accession>
<gene>
    <name evidence="1" type="primary">hemE</name>
    <name type="ordered locus">CT2039</name>
</gene>
<comment type="function">
    <text evidence="1">Catalyzes the decarboxylation of four acetate groups of uroporphyrinogen-III to yield coproporphyrinogen-III.</text>
</comment>
<comment type="catalytic activity">
    <reaction evidence="1">
        <text>uroporphyrinogen III + 4 H(+) = coproporphyrinogen III + 4 CO2</text>
        <dbReference type="Rhea" id="RHEA:19865"/>
        <dbReference type="ChEBI" id="CHEBI:15378"/>
        <dbReference type="ChEBI" id="CHEBI:16526"/>
        <dbReference type="ChEBI" id="CHEBI:57308"/>
        <dbReference type="ChEBI" id="CHEBI:57309"/>
        <dbReference type="EC" id="4.1.1.37"/>
    </reaction>
</comment>
<comment type="pathway">
    <text evidence="1">Porphyrin-containing compound metabolism; protoporphyrin-IX biosynthesis; coproporphyrinogen-III from 5-aminolevulinate: step 4/4.</text>
</comment>
<comment type="subunit">
    <text evidence="1">Homodimer.</text>
</comment>
<comment type="subcellular location">
    <subcellularLocation>
        <location evidence="1">Cytoplasm</location>
    </subcellularLocation>
</comment>
<comment type="similarity">
    <text evidence="1">Belongs to the uroporphyrinogen decarboxylase family.</text>
</comment>
<dbReference type="EC" id="4.1.1.37" evidence="1"/>
<dbReference type="EMBL" id="AE006470">
    <property type="protein sequence ID" value="AAM73256.1"/>
    <property type="molecule type" value="Genomic_DNA"/>
</dbReference>
<dbReference type="RefSeq" id="NP_662914.1">
    <property type="nucleotide sequence ID" value="NC_002932.3"/>
</dbReference>
<dbReference type="RefSeq" id="WP_010933694.1">
    <property type="nucleotide sequence ID" value="NC_002932.3"/>
</dbReference>
<dbReference type="SMR" id="Q8KAW2"/>
<dbReference type="STRING" id="194439.CT2039"/>
<dbReference type="EnsemblBacteria" id="AAM73256">
    <property type="protein sequence ID" value="AAM73256"/>
    <property type="gene ID" value="CT2039"/>
</dbReference>
<dbReference type="KEGG" id="cte:CT2039"/>
<dbReference type="PATRIC" id="fig|194439.7.peg.1848"/>
<dbReference type="eggNOG" id="COG0407">
    <property type="taxonomic scope" value="Bacteria"/>
</dbReference>
<dbReference type="HOGENOM" id="CLU_040933_0_0_10"/>
<dbReference type="OrthoDB" id="9806656at2"/>
<dbReference type="UniPathway" id="UPA00251">
    <property type="reaction ID" value="UER00321"/>
</dbReference>
<dbReference type="Proteomes" id="UP000001007">
    <property type="component" value="Chromosome"/>
</dbReference>
<dbReference type="GO" id="GO:0005829">
    <property type="term" value="C:cytosol"/>
    <property type="evidence" value="ECO:0007669"/>
    <property type="project" value="TreeGrafter"/>
</dbReference>
<dbReference type="GO" id="GO:0004853">
    <property type="term" value="F:uroporphyrinogen decarboxylase activity"/>
    <property type="evidence" value="ECO:0007669"/>
    <property type="project" value="UniProtKB-UniRule"/>
</dbReference>
<dbReference type="GO" id="GO:0006782">
    <property type="term" value="P:protoporphyrinogen IX biosynthetic process"/>
    <property type="evidence" value="ECO:0007669"/>
    <property type="project" value="UniProtKB-UniRule"/>
</dbReference>
<dbReference type="CDD" id="cd00717">
    <property type="entry name" value="URO-D"/>
    <property type="match status" value="1"/>
</dbReference>
<dbReference type="FunFam" id="3.20.20.210:FF:000001">
    <property type="entry name" value="Uroporphyrinogen decarboxylase"/>
    <property type="match status" value="1"/>
</dbReference>
<dbReference type="Gene3D" id="3.20.20.210">
    <property type="match status" value="1"/>
</dbReference>
<dbReference type="HAMAP" id="MF_00218">
    <property type="entry name" value="URO_D"/>
    <property type="match status" value="1"/>
</dbReference>
<dbReference type="InterPro" id="IPR038071">
    <property type="entry name" value="UROD/MetE-like_sf"/>
</dbReference>
<dbReference type="InterPro" id="IPR006361">
    <property type="entry name" value="Uroporphyrinogen_deCO2ase_HemE"/>
</dbReference>
<dbReference type="InterPro" id="IPR000257">
    <property type="entry name" value="Uroporphyrinogen_deCOase"/>
</dbReference>
<dbReference type="NCBIfam" id="TIGR01464">
    <property type="entry name" value="hemE"/>
    <property type="match status" value="1"/>
</dbReference>
<dbReference type="PANTHER" id="PTHR21091">
    <property type="entry name" value="METHYLTETRAHYDROFOLATE:HOMOCYSTEINE METHYLTRANSFERASE RELATED"/>
    <property type="match status" value="1"/>
</dbReference>
<dbReference type="PANTHER" id="PTHR21091:SF169">
    <property type="entry name" value="UROPORPHYRINOGEN DECARBOXYLASE"/>
    <property type="match status" value="1"/>
</dbReference>
<dbReference type="Pfam" id="PF01208">
    <property type="entry name" value="URO-D"/>
    <property type="match status" value="1"/>
</dbReference>
<dbReference type="SUPFAM" id="SSF51726">
    <property type="entry name" value="UROD/MetE-like"/>
    <property type="match status" value="1"/>
</dbReference>
<dbReference type="PROSITE" id="PS00906">
    <property type="entry name" value="UROD_1"/>
    <property type="match status" value="1"/>
</dbReference>
<dbReference type="PROSITE" id="PS00907">
    <property type="entry name" value="UROD_2"/>
    <property type="match status" value="1"/>
</dbReference>
<reference key="1">
    <citation type="journal article" date="2002" name="Proc. Natl. Acad. Sci. U.S.A.">
        <title>The complete genome sequence of Chlorobium tepidum TLS, a photosynthetic, anaerobic, green-sulfur bacterium.</title>
        <authorList>
            <person name="Eisen J.A."/>
            <person name="Nelson K.E."/>
            <person name="Paulsen I.T."/>
            <person name="Heidelberg J.F."/>
            <person name="Wu M."/>
            <person name="Dodson R.J."/>
            <person name="DeBoy R.T."/>
            <person name="Gwinn M.L."/>
            <person name="Nelson W.C."/>
            <person name="Haft D.H."/>
            <person name="Hickey E.K."/>
            <person name="Peterson J.D."/>
            <person name="Durkin A.S."/>
            <person name="Kolonay J.F."/>
            <person name="Yang F."/>
            <person name="Holt I.E."/>
            <person name="Umayam L.A."/>
            <person name="Mason T.M."/>
            <person name="Brenner M."/>
            <person name="Shea T.P."/>
            <person name="Parksey D.S."/>
            <person name="Nierman W.C."/>
            <person name="Feldblyum T.V."/>
            <person name="Hansen C.L."/>
            <person name="Craven M.B."/>
            <person name="Radune D."/>
            <person name="Vamathevan J.J."/>
            <person name="Khouri H.M."/>
            <person name="White O."/>
            <person name="Gruber T.M."/>
            <person name="Ketchum K.A."/>
            <person name="Venter J.C."/>
            <person name="Tettelin H."/>
            <person name="Bryant D.A."/>
            <person name="Fraser C.M."/>
        </authorList>
    </citation>
    <scope>NUCLEOTIDE SEQUENCE [LARGE SCALE GENOMIC DNA]</scope>
    <source>
        <strain>ATCC 49652 / DSM 12025 / NBRC 103806 / TLS</strain>
    </source>
</reference>
<keyword id="KW-0963">Cytoplasm</keyword>
<keyword id="KW-0210">Decarboxylase</keyword>
<keyword id="KW-0456">Lyase</keyword>
<keyword id="KW-0627">Porphyrin biosynthesis</keyword>
<keyword id="KW-1185">Reference proteome</keyword>
<name>DCUP_CHLTE</name>
<organism>
    <name type="scientific">Chlorobaculum tepidum (strain ATCC 49652 / DSM 12025 / NBRC 103806 / TLS)</name>
    <name type="common">Chlorobium tepidum</name>
    <dbReference type="NCBI Taxonomy" id="194439"/>
    <lineage>
        <taxon>Bacteria</taxon>
        <taxon>Pseudomonadati</taxon>
        <taxon>Chlorobiota</taxon>
        <taxon>Chlorobiia</taxon>
        <taxon>Chlorobiales</taxon>
        <taxon>Chlorobiaceae</taxon>
        <taxon>Chlorobaculum</taxon>
    </lineage>
</organism>
<protein>
    <recommendedName>
        <fullName evidence="1">Uroporphyrinogen decarboxylase</fullName>
        <shortName evidence="1">UPD</shortName>
        <shortName evidence="1">URO-D</shortName>
        <ecNumber evidence="1">4.1.1.37</ecNumber>
    </recommendedName>
</protein>
<feature type="chain" id="PRO_0000187596" description="Uroporphyrinogen decarboxylase">
    <location>
        <begin position="1"/>
        <end position="351"/>
    </location>
</feature>
<feature type="binding site" evidence="1">
    <location>
        <begin position="25"/>
        <end position="29"/>
    </location>
    <ligand>
        <name>substrate</name>
    </ligand>
</feature>
<feature type="binding site" evidence="1">
    <location>
        <position position="43"/>
    </location>
    <ligand>
        <name>substrate</name>
    </ligand>
</feature>
<feature type="binding site" evidence="1">
    <location>
        <position position="74"/>
    </location>
    <ligand>
        <name>substrate</name>
    </ligand>
</feature>
<feature type="binding site" evidence="1">
    <location>
        <position position="151"/>
    </location>
    <ligand>
        <name>substrate</name>
    </ligand>
</feature>
<feature type="binding site" evidence="1">
    <location>
        <position position="206"/>
    </location>
    <ligand>
        <name>substrate</name>
    </ligand>
</feature>
<feature type="binding site" evidence="1">
    <location>
        <position position="325"/>
    </location>
    <ligand>
        <name>substrate</name>
    </ligand>
</feature>
<feature type="site" description="Transition state stabilizer" evidence="1">
    <location>
        <position position="74"/>
    </location>
</feature>
<evidence type="ECO:0000255" key="1">
    <source>
        <dbReference type="HAMAP-Rule" id="MF_00218"/>
    </source>
</evidence>
<proteinExistence type="inferred from homology"/>
<sequence>MLKNDLFIRALKRQATPRTPIWVMRQAGRYLPEYRAVREKTDFLTLCKTPELACEVTIQPVDLMGVDAAIIFSDILVVNEAMGMNVEIIETKGIKLTPPIRSQADIDKLIDPDIDEKLGYVLDAIRLAKKELNDRVPLIGFSGAAWTLFTYAVEGGGSKNYTWAKKMMYREPKMAHQLLQKISDCISAYLVKQVEAGADAIQIFDSWASALSEDDYREFALPYIKQNVAAVKAAYPEIPVIAFAKDMNTILSDIADCGADAVGLGWNIDIAKARKELNDRVCLQGNMDPTVLYGTPEKIKSEAAKVLKQFGQHNDHSGHVFNLGHGILPDVDPANLKCLVEFVKEESAKYH</sequence>